<sequence length="418" mass="46938">MSMFFYLFLLVLGLQATIHCAPHNSSEGKVTTCHLPQQNATLYKMPSINADFAFRLYRKLSVENPDLNIFFSPVSISAALAMLSFGSGSSTQTQILEVLGFNLTDTPVKELQQGFQHLICSLNFPNNELELQMGNAVFIGQQLKPLAKFLDDVKTLYETEVFSTDFSNVSAAQHEINSYVEKQTKGKIVGLIQDLKLNIIMILVNYIHFKAQWANPFRVSKTEESSNFSVDKSTTVQVPMMHQLEQYYHYVDVELNCTVLQMDYSANALALFVLPKEGHMEWVEAAMSSKTLKKWNHLLQKGWVELFVPKFSISATYDLGSTLQKMGMRDAFAESADFPGITKDNGLKLSYAFHKAVLHIGEEGTKEGASPEAGSLDQPEVAPLHAVIRLDRTFLLMILEKRTRSVLFLGKVVDPTKE</sequence>
<proteinExistence type="evidence at protein level"/>
<comment type="function">
    <text>Major thyroid hormone transport protein in serum.</text>
</comment>
<comment type="subcellular location">
    <subcellularLocation>
        <location>Secreted</location>
    </subcellularLocation>
</comment>
<comment type="tissue specificity">
    <text>Expressed by the liver and secreted in plasma.</text>
</comment>
<comment type="similarity">
    <text evidence="3">Belongs to the serpin family.</text>
</comment>
<comment type="sequence caution" evidence="3">
    <conflict type="erroneous initiation">
        <sequence resource="EMBL-CDS" id="AAA42205"/>
    </conflict>
</comment>
<evidence type="ECO:0000250" key="1"/>
<evidence type="ECO:0000255" key="2"/>
<evidence type="ECO:0000305" key="3"/>
<protein>
    <recommendedName>
        <fullName>Thyroxine-binding globulin</fullName>
    </recommendedName>
    <alternativeName>
        <fullName>Serpin A7</fullName>
    </alternativeName>
    <alternativeName>
        <fullName>T4-binding globulin</fullName>
    </alternativeName>
</protein>
<keyword id="KW-0903">Direct protein sequencing</keyword>
<keyword id="KW-0325">Glycoprotein</keyword>
<keyword id="KW-1185">Reference proteome</keyword>
<keyword id="KW-0964">Secreted</keyword>
<keyword id="KW-0732">Signal</keyword>
<gene>
    <name type="primary">Serpina7</name>
    <name type="synonym">Tbg</name>
</gene>
<name>THBG_RAT</name>
<accession>P35577</accession>
<feature type="signal peptide">
    <location>
        <begin position="1"/>
        <end position="20"/>
    </location>
</feature>
<feature type="chain" id="PRO_0000032440" description="Thyroxine-binding globulin">
    <location>
        <begin position="21"/>
        <end position="418"/>
    </location>
</feature>
<feature type="binding site" evidence="1">
    <location>
        <position position="296"/>
    </location>
    <ligand>
        <name>thyroxine</name>
        <dbReference type="ChEBI" id="CHEBI:305790"/>
    </ligand>
</feature>
<feature type="binding site" evidence="1">
    <location>
        <position position="401"/>
    </location>
    <ligand>
        <name>thyroxine</name>
        <dbReference type="ChEBI" id="CHEBI:305790"/>
    </ligand>
</feature>
<feature type="glycosylation site" description="N-linked (GlcNAc...) asparagine" evidence="2">
    <location>
        <position position="24"/>
    </location>
</feature>
<feature type="glycosylation site" description="N-linked (GlcNAc...) asparagine" evidence="2">
    <location>
        <position position="39"/>
    </location>
</feature>
<feature type="glycosylation site" description="N-linked (GlcNAc...) asparagine" evidence="2">
    <location>
        <position position="102"/>
    </location>
</feature>
<feature type="glycosylation site" description="N-linked (GlcNAc...) asparagine" evidence="2">
    <location>
        <position position="168"/>
    </location>
</feature>
<feature type="glycosylation site" description="N-linked (GlcNAc...) asparagine" evidence="2">
    <location>
        <position position="227"/>
    </location>
</feature>
<feature type="glycosylation site" description="N-linked (GlcNAc...) asparagine" evidence="2">
    <location>
        <position position="256"/>
    </location>
</feature>
<reference key="1">
    <citation type="journal article" date="1994" name="Endocrinology">
        <title>Molecular cloning of the rat thyroxine-binding globulin gene and analysis of its promoter activity.</title>
        <authorList>
            <person name="Tani Y."/>
            <person name="Mori Y."/>
            <person name="Miura Y."/>
            <person name="Okamoto H."/>
            <person name="Inagaki A."/>
            <person name="Saito H."/>
            <person name="Oiso Y."/>
        </authorList>
    </citation>
    <scope>NUCLEOTIDE SEQUENCE [MRNA]</scope>
</reference>
<reference key="2">
    <citation type="journal article" date="1991" name="Biochemistry">
        <title>Molecular cloning and primary structure of rat thyroxine-binding globulin.</title>
        <authorList>
            <person name="Imamura S."/>
            <person name="Mori Y."/>
            <person name="Murata Y."/>
            <person name="Yamamori I."/>
            <person name="Miura Y."/>
            <person name="Oiso Y."/>
            <person name="Seo H."/>
            <person name="Matsui N."/>
            <person name="Refetoff S."/>
        </authorList>
    </citation>
    <scope>NUCLEOTIDE SEQUENCE [MRNA] OF 10-418</scope>
    <scope>PARTIAL PROTEIN SEQUENCE</scope>
    <source>
        <tissue>Liver</tissue>
    </source>
</reference>
<dbReference type="EMBL" id="M63991">
    <property type="protein sequence ID" value="AAA42205.1"/>
    <property type="status" value="ALT_INIT"/>
    <property type="molecule type" value="mRNA"/>
</dbReference>
<dbReference type="PIR" id="A39567">
    <property type="entry name" value="A39567"/>
</dbReference>
<dbReference type="SMR" id="P35577"/>
<dbReference type="FunCoup" id="P35577">
    <property type="interactions" value="45"/>
</dbReference>
<dbReference type="STRING" id="10116.ENSRNOP00000014739"/>
<dbReference type="MEROPS" id="I04.955"/>
<dbReference type="GlyCosmos" id="P35577">
    <property type="glycosylation" value="6 sites, No reported glycans"/>
</dbReference>
<dbReference type="GlyGen" id="P35577">
    <property type="glycosylation" value="6 sites"/>
</dbReference>
<dbReference type="PhosphoSitePlus" id="P35577"/>
<dbReference type="PaxDb" id="10116-ENSRNOP00000014739"/>
<dbReference type="UCSC" id="RGD:619833">
    <property type="organism name" value="rat"/>
</dbReference>
<dbReference type="AGR" id="RGD:619833"/>
<dbReference type="RGD" id="619833">
    <property type="gene designation" value="Serpina7"/>
</dbReference>
<dbReference type="eggNOG" id="KOG2392">
    <property type="taxonomic scope" value="Eukaryota"/>
</dbReference>
<dbReference type="HOGENOM" id="CLU_023330_2_1_1"/>
<dbReference type="InParanoid" id="P35577"/>
<dbReference type="PhylomeDB" id="P35577"/>
<dbReference type="PRO" id="PR:P35577"/>
<dbReference type="Proteomes" id="UP000002494">
    <property type="component" value="Unplaced"/>
</dbReference>
<dbReference type="GO" id="GO:0005615">
    <property type="term" value="C:extracellular space"/>
    <property type="evidence" value="ECO:0000314"/>
    <property type="project" value="RGD"/>
</dbReference>
<dbReference type="GO" id="GO:0042562">
    <property type="term" value="F:hormone binding"/>
    <property type="evidence" value="ECO:0000314"/>
    <property type="project" value="RGD"/>
</dbReference>
<dbReference type="GO" id="GO:0004867">
    <property type="term" value="F:serine-type endopeptidase inhibitor activity"/>
    <property type="evidence" value="ECO:0000318"/>
    <property type="project" value="GO_Central"/>
</dbReference>
<dbReference type="GO" id="GO:0015349">
    <property type="term" value="F:thyroid hormone transmembrane transporter activity"/>
    <property type="evidence" value="ECO:0000304"/>
    <property type="project" value="RGD"/>
</dbReference>
<dbReference type="GO" id="GO:0009791">
    <property type="term" value="P:post-embryonic development"/>
    <property type="evidence" value="ECO:0000314"/>
    <property type="project" value="RGD"/>
</dbReference>
<dbReference type="GO" id="GO:0051412">
    <property type="term" value="P:response to corticosterone"/>
    <property type="evidence" value="ECO:0000270"/>
    <property type="project" value="RGD"/>
</dbReference>
<dbReference type="GO" id="GO:0031667">
    <property type="term" value="P:response to nutrient levels"/>
    <property type="evidence" value="ECO:0000270"/>
    <property type="project" value="RGD"/>
</dbReference>
<dbReference type="GO" id="GO:0043434">
    <property type="term" value="P:response to peptide hormone"/>
    <property type="evidence" value="ECO:0000270"/>
    <property type="project" value="RGD"/>
</dbReference>
<dbReference type="GO" id="GO:0034695">
    <property type="term" value="P:response to prostaglandin E"/>
    <property type="evidence" value="ECO:0000270"/>
    <property type="project" value="RGD"/>
</dbReference>
<dbReference type="GO" id="GO:0048545">
    <property type="term" value="P:response to steroid hormone"/>
    <property type="evidence" value="ECO:0000270"/>
    <property type="project" value="RGD"/>
</dbReference>
<dbReference type="GO" id="GO:0033189">
    <property type="term" value="P:response to vitamin A"/>
    <property type="evidence" value="ECO:0000314"/>
    <property type="project" value="RGD"/>
</dbReference>
<dbReference type="GO" id="GO:0009410">
    <property type="term" value="P:response to xenobiotic stimulus"/>
    <property type="evidence" value="ECO:0000314"/>
    <property type="project" value="RGD"/>
</dbReference>
<dbReference type="GO" id="GO:0070327">
    <property type="term" value="P:thyroid hormone transport"/>
    <property type="evidence" value="ECO:0000266"/>
    <property type="project" value="RGD"/>
</dbReference>
<dbReference type="FunFam" id="2.30.39.10:FF:000003">
    <property type="entry name" value="alpha-1-antitrypsin isoform X1"/>
    <property type="match status" value="1"/>
</dbReference>
<dbReference type="FunFam" id="3.30.497.10:FF:000001">
    <property type="entry name" value="Serine protease inhibitor"/>
    <property type="match status" value="1"/>
</dbReference>
<dbReference type="FunFam" id="2.10.310.10:FF:000001">
    <property type="entry name" value="Serpin family A member 1"/>
    <property type="match status" value="1"/>
</dbReference>
<dbReference type="Gene3D" id="2.30.39.10">
    <property type="entry name" value="Alpha-1-antitrypsin, domain 1"/>
    <property type="match status" value="1"/>
</dbReference>
<dbReference type="Gene3D" id="3.30.497.10">
    <property type="entry name" value="Antithrombin, subunit I, domain 2"/>
    <property type="match status" value="1"/>
</dbReference>
<dbReference type="Gene3D" id="2.10.310.10">
    <property type="entry name" value="Serpins superfamily"/>
    <property type="match status" value="1"/>
</dbReference>
<dbReference type="InterPro" id="IPR023795">
    <property type="entry name" value="Serpin_CS"/>
</dbReference>
<dbReference type="InterPro" id="IPR023796">
    <property type="entry name" value="Serpin_dom"/>
</dbReference>
<dbReference type="InterPro" id="IPR000215">
    <property type="entry name" value="Serpin_fam"/>
</dbReference>
<dbReference type="InterPro" id="IPR036186">
    <property type="entry name" value="Serpin_sf"/>
</dbReference>
<dbReference type="InterPro" id="IPR042178">
    <property type="entry name" value="Serpin_sf_1"/>
</dbReference>
<dbReference type="InterPro" id="IPR042185">
    <property type="entry name" value="Serpin_sf_2"/>
</dbReference>
<dbReference type="PANTHER" id="PTHR11461">
    <property type="entry name" value="SERINE PROTEASE INHIBITOR, SERPIN"/>
    <property type="match status" value="1"/>
</dbReference>
<dbReference type="PANTHER" id="PTHR11461:SF375">
    <property type="entry name" value="THYROXINE-BINDING GLOBULIN"/>
    <property type="match status" value="1"/>
</dbReference>
<dbReference type="Pfam" id="PF00079">
    <property type="entry name" value="Serpin"/>
    <property type="match status" value="1"/>
</dbReference>
<dbReference type="SMART" id="SM00093">
    <property type="entry name" value="SERPIN"/>
    <property type="match status" value="1"/>
</dbReference>
<dbReference type="SUPFAM" id="SSF56574">
    <property type="entry name" value="Serpins"/>
    <property type="match status" value="1"/>
</dbReference>
<dbReference type="PROSITE" id="PS00284">
    <property type="entry name" value="SERPIN"/>
    <property type="match status" value="1"/>
</dbReference>
<organism>
    <name type="scientific">Rattus norvegicus</name>
    <name type="common">Rat</name>
    <dbReference type="NCBI Taxonomy" id="10116"/>
    <lineage>
        <taxon>Eukaryota</taxon>
        <taxon>Metazoa</taxon>
        <taxon>Chordata</taxon>
        <taxon>Craniata</taxon>
        <taxon>Vertebrata</taxon>
        <taxon>Euteleostomi</taxon>
        <taxon>Mammalia</taxon>
        <taxon>Eutheria</taxon>
        <taxon>Euarchontoglires</taxon>
        <taxon>Glires</taxon>
        <taxon>Rodentia</taxon>
        <taxon>Myomorpha</taxon>
        <taxon>Muroidea</taxon>
        <taxon>Muridae</taxon>
        <taxon>Murinae</taxon>
        <taxon>Rattus</taxon>
    </lineage>
</organism>